<accession>Q2NT14</accession>
<evidence type="ECO:0000255" key="1">
    <source>
        <dbReference type="HAMAP-Rule" id="MF_01832"/>
    </source>
</evidence>
<comment type="function">
    <text evidence="1">Participates in cysteine desulfuration mediated by SufS. Cysteine desulfuration mobilizes sulfur from L-cysteine to yield L-alanine and constitutes an essential step in sulfur metabolism for biosynthesis of a variety of sulfur-containing biomolecules. Functions as a sulfur acceptor for SufS, by mediating the direct transfer of the sulfur atom from the S-sulfanylcysteine of SufS, an intermediate product of cysteine desulfuration process.</text>
</comment>
<comment type="pathway">
    <text evidence="1">Cofactor biosynthesis; iron-sulfur cluster biosynthesis.</text>
</comment>
<comment type="subunit">
    <text evidence="1">Homodimer. Interacts with SufS.</text>
</comment>
<comment type="subcellular location">
    <subcellularLocation>
        <location evidence="1">Cytoplasm</location>
    </subcellularLocation>
</comment>
<comment type="similarity">
    <text evidence="1">Belongs to the SufE family.</text>
</comment>
<feature type="chain" id="PRO_1000070450" description="Cysteine desulfuration protein SufE">
    <location>
        <begin position="1"/>
        <end position="138"/>
    </location>
</feature>
<feature type="active site" description="Cysteine persulfide intermediate" evidence="1">
    <location>
        <position position="51"/>
    </location>
</feature>
<sequence>MANLPDKDKLLRNFSRCGNWEEKYLYIIELGGQLPPLSAEMRTPDNRIAGCQSQVWIVLSTQADGSVQLYGDSDAAIVKGLIAMVFILYQGLTLAEIVAYDVRPFFDALALTQHLTPSRSQGLEAMVRGIRAQVAARQ</sequence>
<dbReference type="EMBL" id="AP008232">
    <property type="protein sequence ID" value="BAE74711.1"/>
    <property type="molecule type" value="Genomic_DNA"/>
</dbReference>
<dbReference type="RefSeq" id="WP_011411256.1">
    <property type="nucleotide sequence ID" value="NC_007712.1"/>
</dbReference>
<dbReference type="SMR" id="Q2NT14"/>
<dbReference type="STRING" id="343509.SG1436"/>
<dbReference type="KEGG" id="sgl:SG1436"/>
<dbReference type="eggNOG" id="COG2166">
    <property type="taxonomic scope" value="Bacteria"/>
</dbReference>
<dbReference type="HOGENOM" id="CLU_124502_1_1_6"/>
<dbReference type="OrthoDB" id="9799320at2"/>
<dbReference type="BioCyc" id="SGLO343509:SGP1_RS12725-MONOMER"/>
<dbReference type="UniPathway" id="UPA00266"/>
<dbReference type="Proteomes" id="UP000001932">
    <property type="component" value="Chromosome"/>
</dbReference>
<dbReference type="GO" id="GO:0005737">
    <property type="term" value="C:cytoplasm"/>
    <property type="evidence" value="ECO:0007669"/>
    <property type="project" value="UniProtKB-SubCell"/>
</dbReference>
<dbReference type="GO" id="GO:0016226">
    <property type="term" value="P:iron-sulfur cluster assembly"/>
    <property type="evidence" value="ECO:0007669"/>
    <property type="project" value="InterPro"/>
</dbReference>
<dbReference type="GO" id="GO:0006790">
    <property type="term" value="P:sulfur compound metabolic process"/>
    <property type="evidence" value="ECO:0007669"/>
    <property type="project" value="InterPro"/>
</dbReference>
<dbReference type="Gene3D" id="3.90.1010.10">
    <property type="match status" value="1"/>
</dbReference>
<dbReference type="HAMAP" id="MF_01832">
    <property type="entry name" value="SufE"/>
    <property type="match status" value="1"/>
</dbReference>
<dbReference type="InterPro" id="IPR023939">
    <property type="entry name" value="Cysteine_desulfuration_SufE"/>
</dbReference>
<dbReference type="InterPro" id="IPR003808">
    <property type="entry name" value="Fe-S_metab-assoc_dom"/>
</dbReference>
<dbReference type="NCBIfam" id="NF006792">
    <property type="entry name" value="PRK09296.1"/>
    <property type="match status" value="1"/>
</dbReference>
<dbReference type="PANTHER" id="PTHR43597:SF3">
    <property type="entry name" value="CYSTEINE DESULFURATION PROTEIN SUFE"/>
    <property type="match status" value="1"/>
</dbReference>
<dbReference type="PANTHER" id="PTHR43597">
    <property type="entry name" value="SULFUR ACCEPTOR PROTEIN CSDE"/>
    <property type="match status" value="1"/>
</dbReference>
<dbReference type="Pfam" id="PF02657">
    <property type="entry name" value="SufE"/>
    <property type="match status" value="1"/>
</dbReference>
<dbReference type="SUPFAM" id="SSF82649">
    <property type="entry name" value="SufE/NifU"/>
    <property type="match status" value="1"/>
</dbReference>
<keyword id="KW-0963">Cytoplasm</keyword>
<name>SUFE_SODGM</name>
<proteinExistence type="inferred from homology"/>
<reference key="1">
    <citation type="journal article" date="2006" name="Genome Res.">
        <title>Massive genome erosion and functional adaptations provide insights into the symbiotic lifestyle of Sodalis glossinidius in the tsetse host.</title>
        <authorList>
            <person name="Toh H."/>
            <person name="Weiss B.L."/>
            <person name="Perkin S.A.H."/>
            <person name="Yamashita A."/>
            <person name="Oshima K."/>
            <person name="Hattori M."/>
            <person name="Aksoy S."/>
        </authorList>
    </citation>
    <scope>NUCLEOTIDE SEQUENCE [LARGE SCALE GENOMIC DNA]</scope>
    <source>
        <strain>morsitans</strain>
    </source>
</reference>
<organism>
    <name type="scientific">Sodalis glossinidius (strain morsitans)</name>
    <dbReference type="NCBI Taxonomy" id="343509"/>
    <lineage>
        <taxon>Bacteria</taxon>
        <taxon>Pseudomonadati</taxon>
        <taxon>Pseudomonadota</taxon>
        <taxon>Gammaproteobacteria</taxon>
        <taxon>Enterobacterales</taxon>
        <taxon>Bruguierivoracaceae</taxon>
        <taxon>Sodalis</taxon>
    </lineage>
</organism>
<gene>
    <name evidence="1" type="primary">sufE</name>
    <name type="ordered locus">SG1436</name>
</gene>
<protein>
    <recommendedName>
        <fullName evidence="1">Cysteine desulfuration protein SufE</fullName>
    </recommendedName>
</protein>